<dbReference type="EMBL" id="AB023231">
    <property type="protein sequence ID" value="BAA76858.2"/>
    <property type="status" value="ALT_INIT"/>
    <property type="molecule type" value="mRNA"/>
</dbReference>
<dbReference type="EMBL" id="AC021443">
    <property type="status" value="NOT_ANNOTATED_CDS"/>
    <property type="molecule type" value="Genomic_DNA"/>
</dbReference>
<dbReference type="EMBL" id="BC037404">
    <property type="protein sequence ID" value="AAH37404.1"/>
    <property type="molecule type" value="mRNA"/>
</dbReference>
<dbReference type="EMBL" id="AL137480">
    <property type="protein sequence ID" value="CAB70761.1"/>
    <property type="molecule type" value="mRNA"/>
</dbReference>
<dbReference type="EMBL" id="AK022987">
    <property type="protein sequence ID" value="BAB14348.1"/>
    <property type="molecule type" value="mRNA"/>
</dbReference>
<dbReference type="CCDS" id="CCDS41644.1">
    <molecule id="Q8N3X1-1"/>
</dbReference>
<dbReference type="PIR" id="T46422">
    <property type="entry name" value="T46422"/>
</dbReference>
<dbReference type="RefSeq" id="NP_001305268.1">
    <molecule id="Q8N3X1-2"/>
    <property type="nucleotide sequence ID" value="NM_001318339.3"/>
</dbReference>
<dbReference type="RefSeq" id="NP_056123.2">
    <molecule id="Q8N3X1-1"/>
    <property type="nucleotide sequence ID" value="NM_015308.5"/>
</dbReference>
<dbReference type="SMR" id="Q8N3X1"/>
<dbReference type="BioGRID" id="116941">
    <property type="interactions" value="71"/>
</dbReference>
<dbReference type="DIP" id="DIP-31674N"/>
<dbReference type="FunCoup" id="Q8N3X1">
    <property type="interactions" value="2147"/>
</dbReference>
<dbReference type="IntAct" id="Q8N3X1">
    <property type="interactions" value="43"/>
</dbReference>
<dbReference type="MINT" id="Q8N3X1"/>
<dbReference type="STRING" id="9606.ENSP00000263773"/>
<dbReference type="GlyCosmos" id="Q8N3X1">
    <property type="glycosylation" value="16 sites, 2 glycans"/>
</dbReference>
<dbReference type="GlyGen" id="Q8N3X1">
    <property type="glycosylation" value="20 sites, 2 O-linked glycans (18 sites)"/>
</dbReference>
<dbReference type="iPTMnet" id="Q8N3X1"/>
<dbReference type="MetOSite" id="Q8N3X1"/>
<dbReference type="PhosphoSitePlus" id="Q8N3X1"/>
<dbReference type="BioMuta" id="FNBP4"/>
<dbReference type="DMDM" id="313104235"/>
<dbReference type="jPOST" id="Q8N3X1"/>
<dbReference type="MassIVE" id="Q8N3X1"/>
<dbReference type="PaxDb" id="9606-ENSP00000263773"/>
<dbReference type="PeptideAtlas" id="Q8N3X1"/>
<dbReference type="ProteomicsDB" id="71841">
    <molecule id="Q8N3X1-1"/>
</dbReference>
<dbReference type="ProteomicsDB" id="71842">
    <molecule id="Q8N3X1-2"/>
</dbReference>
<dbReference type="Pumba" id="Q8N3X1"/>
<dbReference type="Antibodypedia" id="26877">
    <property type="antibodies" value="44 antibodies from 16 providers"/>
</dbReference>
<dbReference type="DNASU" id="23360"/>
<dbReference type="Ensembl" id="ENST00000263773.10">
    <molecule id="Q8N3X1-1"/>
    <property type="protein sequence ID" value="ENSP00000263773.5"/>
    <property type="gene ID" value="ENSG00000109920.13"/>
</dbReference>
<dbReference type="Ensembl" id="ENST00000646180.2">
    <molecule id="Q8N3X1-1"/>
    <property type="protein sequence ID" value="ENSP00000494562.1"/>
    <property type="gene ID" value="ENSG00000285182.2"/>
</dbReference>
<dbReference type="GeneID" id="23360"/>
<dbReference type="KEGG" id="hsa:23360"/>
<dbReference type="MANE-Select" id="ENST00000263773.10">
    <property type="protein sequence ID" value="ENSP00000263773.5"/>
    <property type="RefSeq nucleotide sequence ID" value="NM_015308.5"/>
    <property type="RefSeq protein sequence ID" value="NP_056123.2"/>
</dbReference>
<dbReference type="UCSC" id="uc009ylv.4">
    <molecule id="Q8N3X1-1"/>
    <property type="organism name" value="human"/>
</dbReference>
<dbReference type="AGR" id="HGNC:19752"/>
<dbReference type="CTD" id="23360"/>
<dbReference type="DisGeNET" id="23360"/>
<dbReference type="GeneCards" id="FNBP4"/>
<dbReference type="HGNC" id="HGNC:19752">
    <property type="gene designation" value="FNBP4"/>
</dbReference>
<dbReference type="HPA" id="ENSG00000109920">
    <property type="expression patterns" value="Low tissue specificity"/>
</dbReference>
<dbReference type="MalaCards" id="FNBP4"/>
<dbReference type="MIM" id="615265">
    <property type="type" value="gene"/>
</dbReference>
<dbReference type="neXtProt" id="NX_Q8N3X1"/>
<dbReference type="OpenTargets" id="ENSG00000109920"/>
<dbReference type="PharmGKB" id="PA134971679"/>
<dbReference type="VEuPathDB" id="HostDB:ENSG00000109920"/>
<dbReference type="eggNOG" id="ENOG502QTDD">
    <property type="taxonomic scope" value="Eukaryota"/>
</dbReference>
<dbReference type="GeneTree" id="ENSGT00390000003450"/>
<dbReference type="HOGENOM" id="CLU_015402_0_0_1"/>
<dbReference type="InParanoid" id="Q8N3X1"/>
<dbReference type="OMA" id="QDGDGHR"/>
<dbReference type="OrthoDB" id="2444812at2759"/>
<dbReference type="PAN-GO" id="Q8N3X1">
    <property type="GO annotations" value="0 GO annotations based on evolutionary models"/>
</dbReference>
<dbReference type="PhylomeDB" id="Q8N3X1"/>
<dbReference type="TreeFam" id="TF331046"/>
<dbReference type="PathwayCommons" id="Q8N3X1"/>
<dbReference type="SignaLink" id="Q8N3X1"/>
<dbReference type="BioGRID-ORCS" id="23360">
    <property type="hits" value="377 hits in 1166 CRISPR screens"/>
</dbReference>
<dbReference type="ChiTaRS" id="FNBP4">
    <property type="organism name" value="human"/>
</dbReference>
<dbReference type="GeneWiki" id="FNBP4"/>
<dbReference type="GenomeRNAi" id="23360"/>
<dbReference type="Pharos" id="Q8N3X1">
    <property type="development level" value="Tdark"/>
</dbReference>
<dbReference type="PRO" id="PR:Q8N3X1"/>
<dbReference type="Proteomes" id="UP000005640">
    <property type="component" value="Chromosome 11"/>
</dbReference>
<dbReference type="RNAct" id="Q8N3X1">
    <property type="molecule type" value="protein"/>
</dbReference>
<dbReference type="Bgee" id="ENSG00000109920">
    <property type="expression patterns" value="Expressed in sural nerve and 136 other cell types or tissues"/>
</dbReference>
<dbReference type="ExpressionAtlas" id="Q8N3X1">
    <property type="expression patterns" value="baseline and differential"/>
</dbReference>
<dbReference type="GO" id="GO:0005654">
    <property type="term" value="C:nucleoplasm"/>
    <property type="evidence" value="ECO:0000314"/>
    <property type="project" value="HPA"/>
</dbReference>
<dbReference type="CDD" id="cd00201">
    <property type="entry name" value="WW"/>
    <property type="match status" value="2"/>
</dbReference>
<dbReference type="FunFam" id="2.20.70.10:FF:000056">
    <property type="entry name" value="Formin binding protein 4"/>
    <property type="match status" value="1"/>
</dbReference>
<dbReference type="FunFam" id="2.20.70.10:FF:000058">
    <property type="entry name" value="Formin binding protein 4"/>
    <property type="match status" value="1"/>
</dbReference>
<dbReference type="Gene3D" id="2.20.70.10">
    <property type="match status" value="2"/>
</dbReference>
<dbReference type="InterPro" id="IPR001202">
    <property type="entry name" value="WW_dom"/>
</dbReference>
<dbReference type="InterPro" id="IPR036020">
    <property type="entry name" value="WW_dom_sf"/>
</dbReference>
<dbReference type="InterPro" id="IPR053076">
    <property type="entry name" value="WW_domain_protein"/>
</dbReference>
<dbReference type="PANTHER" id="PTHR46697">
    <property type="entry name" value="FORMIN-BINDING PROTEIN 4"/>
    <property type="match status" value="1"/>
</dbReference>
<dbReference type="PANTHER" id="PTHR46697:SF1">
    <property type="entry name" value="FORMIN-BINDING PROTEIN 4"/>
    <property type="match status" value="1"/>
</dbReference>
<dbReference type="Pfam" id="PF00397">
    <property type="entry name" value="WW"/>
    <property type="match status" value="2"/>
</dbReference>
<dbReference type="SMART" id="SM00456">
    <property type="entry name" value="WW"/>
    <property type="match status" value="2"/>
</dbReference>
<dbReference type="SUPFAM" id="SSF51045">
    <property type="entry name" value="WW domain"/>
    <property type="match status" value="2"/>
</dbReference>
<dbReference type="PROSITE" id="PS01159">
    <property type="entry name" value="WW_DOMAIN_1"/>
    <property type="match status" value="1"/>
</dbReference>
<dbReference type="PROSITE" id="PS50020">
    <property type="entry name" value="WW_DOMAIN_2"/>
    <property type="match status" value="2"/>
</dbReference>
<organism>
    <name type="scientific">Homo sapiens</name>
    <name type="common">Human</name>
    <dbReference type="NCBI Taxonomy" id="9606"/>
    <lineage>
        <taxon>Eukaryota</taxon>
        <taxon>Metazoa</taxon>
        <taxon>Chordata</taxon>
        <taxon>Craniata</taxon>
        <taxon>Vertebrata</taxon>
        <taxon>Euteleostomi</taxon>
        <taxon>Mammalia</taxon>
        <taxon>Eutheria</taxon>
        <taxon>Euarchontoglires</taxon>
        <taxon>Primates</taxon>
        <taxon>Haplorrhini</taxon>
        <taxon>Catarrhini</taxon>
        <taxon>Hominidae</taxon>
        <taxon>Homo</taxon>
    </lineage>
</organism>
<gene>
    <name type="primary">FNBP4</name>
    <name type="synonym">FBP30</name>
    <name type="synonym">KIAA1014</name>
</gene>
<evidence type="ECO:0000250" key="1"/>
<evidence type="ECO:0000250" key="2">
    <source>
        <dbReference type="UniProtKB" id="Q6ZQ03"/>
    </source>
</evidence>
<evidence type="ECO:0000255" key="3">
    <source>
        <dbReference type="PROSITE-ProRule" id="PRU00224"/>
    </source>
</evidence>
<evidence type="ECO:0000256" key="4">
    <source>
        <dbReference type="SAM" id="MobiDB-lite"/>
    </source>
</evidence>
<evidence type="ECO:0000269" key="5">
    <source>
    </source>
</evidence>
<evidence type="ECO:0000269" key="6">
    <source>
    </source>
</evidence>
<evidence type="ECO:0000303" key="7">
    <source>
    </source>
</evidence>
<evidence type="ECO:0000305" key="8"/>
<evidence type="ECO:0007744" key="9">
    <source>
    </source>
</evidence>
<evidence type="ECO:0007744" key="10">
    <source>
    </source>
</evidence>
<evidence type="ECO:0007744" key="11">
    <source>
    </source>
</evidence>
<evidence type="ECO:0007744" key="12">
    <source>
    </source>
</evidence>
<evidence type="ECO:0007744" key="13">
    <source>
    </source>
</evidence>
<evidence type="ECO:0007744" key="14">
    <source>
    </source>
</evidence>
<evidence type="ECO:0007744" key="15">
    <source>
    </source>
</evidence>
<evidence type="ECO:0007744" key="16">
    <source>
    </source>
</evidence>
<evidence type="ECO:0007744" key="17">
    <source>
    </source>
</evidence>
<evidence type="ECO:0007744" key="18">
    <source>
    </source>
</evidence>
<evidence type="ECO:0007744" key="19">
    <source>
    </source>
</evidence>
<feature type="chain" id="PRO_0000289863" description="Formin-binding protein 4">
    <location>
        <begin position="1"/>
        <end position="1017"/>
    </location>
</feature>
<feature type="domain" description="WW 1" evidence="3">
    <location>
        <begin position="214"/>
        <end position="248"/>
    </location>
</feature>
<feature type="domain" description="WW 2" evidence="3">
    <location>
        <begin position="595"/>
        <end position="629"/>
    </location>
</feature>
<feature type="region of interest" description="Disordered" evidence="4">
    <location>
        <begin position="1"/>
        <end position="141"/>
    </location>
</feature>
<feature type="region of interest" description="Disordered" evidence="4">
    <location>
        <begin position="160"/>
        <end position="202"/>
    </location>
</feature>
<feature type="region of interest" description="Disordered" evidence="4">
    <location>
        <begin position="421"/>
        <end position="519"/>
    </location>
</feature>
<feature type="region of interest" description="Disordered" evidence="4">
    <location>
        <begin position="621"/>
        <end position="676"/>
    </location>
</feature>
<feature type="region of interest" description="Disordered" evidence="4">
    <location>
        <begin position="706"/>
        <end position="792"/>
    </location>
</feature>
<feature type="region of interest" description="Disordered" evidence="4">
    <location>
        <begin position="899"/>
        <end position="994"/>
    </location>
</feature>
<feature type="compositionally biased region" description="Low complexity" evidence="4">
    <location>
        <begin position="40"/>
        <end position="69"/>
    </location>
</feature>
<feature type="compositionally biased region" description="Polar residues" evidence="4">
    <location>
        <begin position="130"/>
        <end position="141"/>
    </location>
</feature>
<feature type="compositionally biased region" description="Low complexity" evidence="4">
    <location>
        <begin position="181"/>
        <end position="200"/>
    </location>
</feature>
<feature type="compositionally biased region" description="Polar residues" evidence="4">
    <location>
        <begin position="428"/>
        <end position="442"/>
    </location>
</feature>
<feature type="compositionally biased region" description="Basic residues" evidence="4">
    <location>
        <begin position="449"/>
        <end position="458"/>
    </location>
</feature>
<feature type="compositionally biased region" description="Low complexity" evidence="4">
    <location>
        <begin position="461"/>
        <end position="474"/>
    </location>
</feature>
<feature type="compositionally biased region" description="Basic and acidic residues" evidence="4">
    <location>
        <begin position="491"/>
        <end position="513"/>
    </location>
</feature>
<feature type="compositionally biased region" description="Acidic residues" evidence="4">
    <location>
        <begin position="627"/>
        <end position="637"/>
    </location>
</feature>
<feature type="compositionally biased region" description="Basic and acidic residues" evidence="4">
    <location>
        <begin position="640"/>
        <end position="656"/>
    </location>
</feature>
<feature type="compositionally biased region" description="Low complexity" evidence="4">
    <location>
        <begin position="657"/>
        <end position="671"/>
    </location>
</feature>
<feature type="compositionally biased region" description="Pro residues" evidence="4">
    <location>
        <begin position="706"/>
        <end position="732"/>
    </location>
</feature>
<feature type="compositionally biased region" description="Acidic residues" evidence="4">
    <location>
        <begin position="733"/>
        <end position="748"/>
    </location>
</feature>
<feature type="compositionally biased region" description="Low complexity" evidence="4">
    <location>
        <begin position="764"/>
        <end position="786"/>
    </location>
</feature>
<feature type="compositionally biased region" description="Pro residues" evidence="4">
    <location>
        <begin position="904"/>
        <end position="925"/>
    </location>
</feature>
<feature type="compositionally biased region" description="Basic residues" evidence="4">
    <location>
        <begin position="929"/>
        <end position="941"/>
    </location>
</feature>
<feature type="compositionally biased region" description="Acidic residues" evidence="4">
    <location>
        <begin position="957"/>
        <end position="970"/>
    </location>
</feature>
<feature type="compositionally biased region" description="Basic and acidic residues" evidence="4">
    <location>
        <begin position="971"/>
        <end position="982"/>
    </location>
</feature>
<feature type="modified residue" description="Phosphoserine" evidence="10 13 15">
    <location>
        <position position="18"/>
    </location>
</feature>
<feature type="modified residue" description="Phosphoserine" evidence="11 13 15">
    <location>
        <position position="116"/>
    </location>
</feature>
<feature type="modified residue" description="Phosphoserine" evidence="2">
    <location>
        <position position="124"/>
    </location>
</feature>
<feature type="modified residue" description="Phosphothreonine" evidence="10">
    <location>
        <position position="172"/>
    </location>
</feature>
<feature type="modified residue" description="N6-acetyllysine" evidence="2">
    <location>
        <position position="290"/>
    </location>
</feature>
<feature type="modified residue" description="Phosphoserine" evidence="2">
    <location>
        <position position="427"/>
    </location>
</feature>
<feature type="modified residue" description="Phosphoserine" evidence="9 11 12 13 14 15">
    <location>
        <position position="432"/>
    </location>
</feature>
<feature type="modified residue" description="Phosphoserine" evidence="12">
    <location>
        <position position="435"/>
    </location>
</feature>
<feature type="modified residue" description="Phosphoserine" evidence="2">
    <location>
        <position position="438"/>
    </location>
</feature>
<feature type="modified residue" description="Phosphoserine" evidence="2">
    <location>
        <position position="442"/>
    </location>
</feature>
<feature type="modified residue" description="Phosphoserine" evidence="13">
    <location>
        <position position="464"/>
    </location>
</feature>
<feature type="modified residue" description="Phosphothreonine" evidence="13 15">
    <location>
        <position position="479"/>
    </location>
</feature>
<feature type="modified residue" description="Phosphoserine" evidence="12 15">
    <location>
        <position position="499"/>
    </location>
</feature>
<feature type="modified residue" description="Phosphoserine" evidence="13 14 15">
    <location>
        <position position="508"/>
    </location>
</feature>
<feature type="modified residue" description="Phosphothreonine" evidence="15">
    <location>
        <position position="516"/>
    </location>
</feature>
<feature type="modified residue" description="Phosphothreonine" evidence="15">
    <location>
        <position position="517"/>
    </location>
</feature>
<feature type="modified residue" description="Phosphoserine" evidence="11">
    <location>
        <position position="963"/>
    </location>
</feature>
<feature type="modified residue" description="Phosphoserine" evidence="11">
    <location>
        <position position="964"/>
    </location>
</feature>
<feature type="modified residue" description="Phosphoserine" evidence="11">
    <location>
        <position position="965"/>
    </location>
</feature>
<feature type="cross-link" description="Glycyl lysine isopeptide (Lys-Gly) (interchain with G-Cter in SUMO1)" evidence="16">
    <location>
        <position position="301"/>
    </location>
</feature>
<feature type="cross-link" description="Glycyl lysine isopeptide (Lys-Gly) (interchain with G-Cter in SUMO2)" evidence="19">
    <location>
        <position position="335"/>
    </location>
</feature>
<feature type="cross-link" description="Glycyl lysine isopeptide (Lys-Gly) (interchain with G-Cter in SUMO1); alternate" evidence="16">
    <location>
        <position position="348"/>
    </location>
</feature>
<feature type="cross-link" description="Glycyl lysine isopeptide (Lys-Gly) (interchain with G-Cter in SUMO2); alternate" evidence="16 17 18 19">
    <location>
        <position position="348"/>
    </location>
</feature>
<feature type="cross-link" description="Glycyl lysine isopeptide (Lys-Gly) (interchain with G-Cter in SUMO1); alternate" evidence="16">
    <location>
        <position position="519"/>
    </location>
</feature>
<feature type="cross-link" description="Glycyl lysine isopeptide (Lys-Gly) (interchain with G-Cter in SUMO2); alternate" evidence="17 19">
    <location>
        <position position="519"/>
    </location>
</feature>
<feature type="splice variant" id="VSP_040292" description="In isoform 2." evidence="7">
    <original>E</original>
    <variation>EGK</variation>
    <location>
        <position position="73"/>
    </location>
</feature>
<feature type="sequence variant" id="VAR_032623" description="In dbSNP:rs34962598.">
    <original>E</original>
    <variation>G</variation>
    <location>
        <position position="125"/>
    </location>
</feature>
<feature type="sequence variant" id="VAR_075345" description="Found in a patient with microphthalmia with limb anomalies; uncertain significance; dbSNP:rs780064080." evidence="6">
    <original>T</original>
    <variation>M</variation>
    <location>
        <position position="228"/>
    </location>
</feature>
<feature type="sequence variant" id="VAR_032624" description="In dbSNP:rs35040940.">
    <original>T</original>
    <variation>A</variation>
    <location>
        <position position="794"/>
    </location>
</feature>
<feature type="sequence conflict" description="In Ref. 1; BAA76858, 4; AAH37404 and 5; CAB70761." evidence="8" ref="1 4 5">
    <location>
        <begin position="55"/>
        <end position="56"/>
    </location>
</feature>
<comment type="subunit">
    <text evidence="5">Binds FMN1. Interacts with the Arg/Gly-rich-flanked Pro-rich of KHDRBS1/SAM68. Arginine methylation in these regions has no effect on this binding.</text>
</comment>
<comment type="interaction">
    <interactant intactId="EBI-310600">
        <id>Q8N3X1</id>
    </interactant>
    <interactant intactId="EBI-466029">
        <id>P42858</id>
        <label>HTT</label>
    </interactant>
    <organismsDiffer>false</organismsDiffer>
    <experiments>6</experiments>
</comment>
<comment type="alternative products">
    <event type="alternative splicing"/>
    <isoform>
        <id>Q8N3X1-1</id>
        <name>1</name>
        <sequence type="displayed"/>
    </isoform>
    <isoform>
        <id>Q8N3X1-2</id>
        <name>2</name>
        <sequence type="described" ref="VSP_040292"/>
    </isoform>
</comment>
<comment type="tissue specificity">
    <text evidence="6">Highly expressed in the eye.</text>
</comment>
<comment type="domain">
    <text evidence="1">These WW domains interact with Arg/Gly-rich-flanked Pro-rich domains found in several WW domain-binding proteins (WBPs). The N-terminal WW domain has the greater ligand-binding ability (By similarity).</text>
</comment>
<comment type="sequence caution" evidence="8">
    <conflict type="erroneous initiation">
        <sequence resource="EMBL-CDS" id="BAA76858"/>
    </conflict>
    <text>Extended N-terminus.</text>
</comment>
<sequence>MGKKSRAVPGRRPILQLSPPGPRGSTPGRDPEPEPDTEPDSTAAVPSQPAPSAATTTTTAVTAAAASDDSPSEDEQEAVQEVPRVVQNPPKPVMTTRPTAVKATGGLCLLGAYADSDDDDNDVSEKLAQSKETNGNQSTDIDSTLANFLAEIDAITAPQPAAPVGASAPPPTPPRPEPKEAATSTLSSSTSNGTDSTQTSGWQYDTQCSLAGVGIEMGDWQEVWDENTGCYYYWNTQTNEVTWELPQYLATQVQGLQHYQPSSVPGAETSFVVNTDIYSKEKTISVSSSKSGPVIAKREVKKEVNEGIQALSNSEEEKKGVAASLLAPLLPEGIKEEEERWRRKVICKEEPVSEVKETSTTVEEATTIVKPQEIMLDNIEDPSQEDLCSVVQSGESEEEEEQDTLELELVLERKKAELRALEEGDGSVSGSSPRSDISQPASQDGMRRLMSKRGKWKMFVRATSPESTSRSSSKTGRDTPENGETAIGAENSEKIDENSDKEMEVEESPEKIKVQTTPKVEEEQDLKFQIGELANTLTSKFEFLGINRQSISNFHVLLLQTETRIADWREGALNGNYLKRKLQDAAEQLKQYEINATPKGWSCHWDRDHRRYFYVNEQSGESQWEFPDGEEEEEESQAQENRDETLAKQTLKDKTGTDSNSTESSETSTGSLCKESFSGQVSSSSLMPLTPFWTLLQSNVPVLQPPLPLEMPPPPPPPPESPPPPPPPPPPAEDGEIQEVEMEDEGSEEPPAPGTEEDTPLKPSAQTTVVTSQSSVDSTISSSSSTKGIKRKATEISTAVVQRSATIGSSPVLYSQSAIATGHQAAGIGNQATGIGHQTIPVSLPAAGMGHQARGMSLQSNYLGLAAAPAIMSYAECSVPIGVTAPSLQPVQARGAVPTATIIEPPPPPPPPPPPPPPAPKMPPPEKTKKGRKDKAKKSKTKMPSLVKKWQSIQRELDEEDNSSSSEEDRESTAQKRIEEWKQQQLVSGMAERNANFEALPEDWRARLKRRKMAPNT</sequence>
<accession>Q8N3X1</accession>
<accession>Q9H985</accession>
<accession>Q9NT81</accession>
<accession>Q9Y2L7</accession>
<name>FNBP4_HUMAN</name>
<proteinExistence type="evidence at protein level"/>
<protein>
    <recommendedName>
        <fullName>Formin-binding protein 4</fullName>
    </recommendedName>
    <alternativeName>
        <fullName>Formin-binding protein 30</fullName>
    </alternativeName>
</protein>
<keyword id="KW-0007">Acetylation</keyword>
<keyword id="KW-0025">Alternative splicing</keyword>
<keyword id="KW-1017">Isopeptide bond</keyword>
<keyword id="KW-0597">Phosphoprotein</keyword>
<keyword id="KW-1267">Proteomics identification</keyword>
<keyword id="KW-1185">Reference proteome</keyword>
<keyword id="KW-0677">Repeat</keyword>
<keyword id="KW-0832">Ubl conjugation</keyword>
<reference key="1">
    <citation type="journal article" date="1999" name="DNA Res.">
        <title>Prediction of the coding sequences of unidentified human genes. XIII. The complete sequences of 100 new cDNA clones from brain which code for large proteins in vitro.</title>
        <authorList>
            <person name="Nagase T."/>
            <person name="Ishikawa K."/>
            <person name="Suyama M."/>
            <person name="Kikuno R."/>
            <person name="Hirosawa M."/>
            <person name="Miyajima N."/>
            <person name="Tanaka A."/>
            <person name="Kotani H."/>
            <person name="Nomura N."/>
            <person name="Ohara O."/>
        </authorList>
    </citation>
    <scope>NUCLEOTIDE SEQUENCE [LARGE SCALE MRNA] (ISOFORM 2)</scope>
    <source>
        <tissue>Brain</tissue>
    </source>
</reference>
<reference key="2">
    <citation type="journal article" date="2002" name="DNA Res.">
        <title>Construction of expression-ready cDNA clones for KIAA genes: manual curation of 330 KIAA cDNA clones.</title>
        <authorList>
            <person name="Nakajima D."/>
            <person name="Okazaki N."/>
            <person name="Yamakawa H."/>
            <person name="Kikuno R."/>
            <person name="Ohara O."/>
            <person name="Nagase T."/>
        </authorList>
    </citation>
    <scope>SEQUENCE REVISION</scope>
</reference>
<reference key="3">
    <citation type="journal article" date="2006" name="Nature">
        <title>Human chromosome 11 DNA sequence and analysis including novel gene identification.</title>
        <authorList>
            <person name="Taylor T.D."/>
            <person name="Noguchi H."/>
            <person name="Totoki Y."/>
            <person name="Toyoda A."/>
            <person name="Kuroki Y."/>
            <person name="Dewar K."/>
            <person name="Lloyd C."/>
            <person name="Itoh T."/>
            <person name="Takeda T."/>
            <person name="Kim D.-W."/>
            <person name="She X."/>
            <person name="Barlow K.F."/>
            <person name="Bloom T."/>
            <person name="Bruford E."/>
            <person name="Chang J.L."/>
            <person name="Cuomo C.A."/>
            <person name="Eichler E."/>
            <person name="FitzGerald M.G."/>
            <person name="Jaffe D.B."/>
            <person name="LaButti K."/>
            <person name="Nicol R."/>
            <person name="Park H.-S."/>
            <person name="Seaman C."/>
            <person name="Sougnez C."/>
            <person name="Yang X."/>
            <person name="Zimmer A.R."/>
            <person name="Zody M.C."/>
            <person name="Birren B.W."/>
            <person name="Nusbaum C."/>
            <person name="Fujiyama A."/>
            <person name="Hattori M."/>
            <person name="Rogers J."/>
            <person name="Lander E.S."/>
            <person name="Sakaki Y."/>
        </authorList>
    </citation>
    <scope>NUCLEOTIDE SEQUENCE [LARGE SCALE GENOMIC DNA]</scope>
</reference>
<reference key="4">
    <citation type="journal article" date="2004" name="Genome Res.">
        <title>The status, quality, and expansion of the NIH full-length cDNA project: the Mammalian Gene Collection (MGC).</title>
        <authorList>
            <consortium name="The MGC Project Team"/>
        </authorList>
    </citation>
    <scope>NUCLEOTIDE SEQUENCE [LARGE SCALE MRNA] (ISOFORM 1)</scope>
    <source>
        <tissue>Cervix</tissue>
    </source>
</reference>
<reference key="5">
    <citation type="journal article" date="2007" name="BMC Genomics">
        <title>The full-ORF clone resource of the German cDNA consortium.</title>
        <authorList>
            <person name="Bechtel S."/>
            <person name="Rosenfelder H."/>
            <person name="Duda A."/>
            <person name="Schmidt C.P."/>
            <person name="Ernst U."/>
            <person name="Wellenreuther R."/>
            <person name="Mehrle A."/>
            <person name="Schuster C."/>
            <person name="Bahr A."/>
            <person name="Bloecker H."/>
            <person name="Heubner D."/>
            <person name="Hoerlein A."/>
            <person name="Michel G."/>
            <person name="Wedler H."/>
            <person name="Koehrer K."/>
            <person name="Ottenwaelder B."/>
            <person name="Poustka A."/>
            <person name="Wiemann S."/>
            <person name="Schupp I."/>
        </authorList>
    </citation>
    <scope>NUCLEOTIDE SEQUENCE [LARGE SCALE MRNA] OF 3-1017 (ISOFORM 1)</scope>
    <source>
        <tissue>Testis</tissue>
    </source>
</reference>
<reference key="6">
    <citation type="journal article" date="2004" name="Nat. Genet.">
        <title>Complete sequencing and characterization of 21,243 full-length human cDNAs.</title>
        <authorList>
            <person name="Ota T."/>
            <person name="Suzuki Y."/>
            <person name="Nishikawa T."/>
            <person name="Otsuki T."/>
            <person name="Sugiyama T."/>
            <person name="Irie R."/>
            <person name="Wakamatsu A."/>
            <person name="Hayashi K."/>
            <person name="Sato H."/>
            <person name="Nagai K."/>
            <person name="Kimura K."/>
            <person name="Makita H."/>
            <person name="Sekine M."/>
            <person name="Obayashi M."/>
            <person name="Nishi T."/>
            <person name="Shibahara T."/>
            <person name="Tanaka T."/>
            <person name="Ishii S."/>
            <person name="Yamamoto J."/>
            <person name="Saito K."/>
            <person name="Kawai Y."/>
            <person name="Isono Y."/>
            <person name="Nakamura Y."/>
            <person name="Nagahari K."/>
            <person name="Murakami K."/>
            <person name="Yasuda T."/>
            <person name="Iwayanagi T."/>
            <person name="Wagatsuma M."/>
            <person name="Shiratori A."/>
            <person name="Sudo H."/>
            <person name="Hosoiri T."/>
            <person name="Kaku Y."/>
            <person name="Kodaira H."/>
            <person name="Kondo H."/>
            <person name="Sugawara M."/>
            <person name="Takahashi M."/>
            <person name="Kanda K."/>
            <person name="Yokoi T."/>
            <person name="Furuya T."/>
            <person name="Kikkawa E."/>
            <person name="Omura Y."/>
            <person name="Abe K."/>
            <person name="Kamihara K."/>
            <person name="Katsuta N."/>
            <person name="Sato K."/>
            <person name="Tanikawa M."/>
            <person name="Yamazaki M."/>
            <person name="Ninomiya K."/>
            <person name="Ishibashi T."/>
            <person name="Yamashita H."/>
            <person name="Murakawa K."/>
            <person name="Fujimori K."/>
            <person name="Tanai H."/>
            <person name="Kimata M."/>
            <person name="Watanabe M."/>
            <person name="Hiraoka S."/>
            <person name="Chiba Y."/>
            <person name="Ishida S."/>
            <person name="Ono Y."/>
            <person name="Takiguchi S."/>
            <person name="Watanabe S."/>
            <person name="Yosida M."/>
            <person name="Hotuta T."/>
            <person name="Kusano J."/>
            <person name="Kanehori K."/>
            <person name="Takahashi-Fujii A."/>
            <person name="Hara H."/>
            <person name="Tanase T.-O."/>
            <person name="Nomura Y."/>
            <person name="Togiya S."/>
            <person name="Komai F."/>
            <person name="Hara R."/>
            <person name="Takeuchi K."/>
            <person name="Arita M."/>
            <person name="Imose N."/>
            <person name="Musashino K."/>
            <person name="Yuuki H."/>
            <person name="Oshima A."/>
            <person name="Sasaki N."/>
            <person name="Aotsuka S."/>
            <person name="Yoshikawa Y."/>
            <person name="Matsunawa H."/>
            <person name="Ichihara T."/>
            <person name="Shiohata N."/>
            <person name="Sano S."/>
            <person name="Moriya S."/>
            <person name="Momiyama H."/>
            <person name="Satoh N."/>
            <person name="Takami S."/>
            <person name="Terashima Y."/>
            <person name="Suzuki O."/>
            <person name="Nakagawa S."/>
            <person name="Senoh A."/>
            <person name="Mizoguchi H."/>
            <person name="Goto Y."/>
            <person name="Shimizu F."/>
            <person name="Wakebe H."/>
            <person name="Hishigaki H."/>
            <person name="Watanabe T."/>
            <person name="Sugiyama A."/>
            <person name="Takemoto M."/>
            <person name="Kawakami B."/>
            <person name="Yamazaki M."/>
            <person name="Watanabe K."/>
            <person name="Kumagai A."/>
            <person name="Itakura S."/>
            <person name="Fukuzumi Y."/>
            <person name="Fujimori Y."/>
            <person name="Komiyama M."/>
            <person name="Tashiro H."/>
            <person name="Tanigami A."/>
            <person name="Fujiwara T."/>
            <person name="Ono T."/>
            <person name="Yamada K."/>
            <person name="Fujii Y."/>
            <person name="Ozaki K."/>
            <person name="Hirao M."/>
            <person name="Ohmori Y."/>
            <person name="Kawabata A."/>
            <person name="Hikiji T."/>
            <person name="Kobatake N."/>
            <person name="Inagaki H."/>
            <person name="Ikema Y."/>
            <person name="Okamoto S."/>
            <person name="Okitani R."/>
            <person name="Kawakami T."/>
            <person name="Noguchi S."/>
            <person name="Itoh T."/>
            <person name="Shigeta K."/>
            <person name="Senba T."/>
            <person name="Matsumura K."/>
            <person name="Nakajima Y."/>
            <person name="Mizuno T."/>
            <person name="Morinaga M."/>
            <person name="Sasaki M."/>
            <person name="Togashi T."/>
            <person name="Oyama M."/>
            <person name="Hata H."/>
            <person name="Watanabe M."/>
            <person name="Komatsu T."/>
            <person name="Mizushima-Sugano J."/>
            <person name="Satoh T."/>
            <person name="Shirai Y."/>
            <person name="Takahashi Y."/>
            <person name="Nakagawa K."/>
            <person name="Okumura K."/>
            <person name="Nagase T."/>
            <person name="Nomura N."/>
            <person name="Kikuchi H."/>
            <person name="Masuho Y."/>
            <person name="Yamashita R."/>
            <person name="Nakai K."/>
            <person name="Yada T."/>
            <person name="Nakamura Y."/>
            <person name="Ohara O."/>
            <person name="Isogai T."/>
            <person name="Sugano S."/>
        </authorList>
    </citation>
    <scope>NUCLEOTIDE SEQUENCE [LARGE SCALE MRNA] OF 457-1017 (ISOFORMS 1/2)</scope>
</reference>
<reference key="7">
    <citation type="journal article" date="2000" name="J. Biol. Chem.">
        <title>Arginine methylation inhibits the binding of proline-rich ligands to Src homology 3, but not WW, domains.</title>
        <authorList>
            <person name="Bedford M.T."/>
            <person name="Frankel A."/>
            <person name="Yaffe M.B."/>
            <person name="Clarke S."/>
            <person name="Leder P."/>
            <person name="Richard S."/>
        </authorList>
    </citation>
    <scope>INTERACTION WITH KHDRBS1</scope>
</reference>
<reference key="8">
    <citation type="journal article" date="2006" name="Cell">
        <title>Global, in vivo, and site-specific phosphorylation dynamics in signaling networks.</title>
        <authorList>
            <person name="Olsen J.V."/>
            <person name="Blagoev B."/>
            <person name="Gnad F."/>
            <person name="Macek B."/>
            <person name="Kumar C."/>
            <person name="Mortensen P."/>
            <person name="Mann M."/>
        </authorList>
    </citation>
    <scope>PHOSPHORYLATION [LARGE SCALE ANALYSIS] AT SER-18 AND THR-172</scope>
    <scope>IDENTIFICATION BY MASS SPECTROMETRY [LARGE SCALE ANALYSIS]</scope>
    <source>
        <tissue>Cervix carcinoma</tissue>
    </source>
</reference>
<reference key="9">
    <citation type="journal article" date="2006" name="Nat. Biotechnol.">
        <title>A probability-based approach for high-throughput protein phosphorylation analysis and site localization.</title>
        <authorList>
            <person name="Beausoleil S.A."/>
            <person name="Villen J."/>
            <person name="Gerber S.A."/>
            <person name="Rush J."/>
            <person name="Gygi S.P."/>
        </authorList>
    </citation>
    <scope>PHOSPHORYLATION [LARGE SCALE ANALYSIS] AT SER-432</scope>
    <scope>IDENTIFICATION BY MASS SPECTROMETRY [LARGE SCALE ANALYSIS]</scope>
    <source>
        <tissue>Cervix carcinoma</tissue>
    </source>
</reference>
<reference key="10">
    <citation type="journal article" date="2008" name="Proc. Natl. Acad. Sci. U.S.A.">
        <title>A quantitative atlas of mitotic phosphorylation.</title>
        <authorList>
            <person name="Dephoure N."/>
            <person name="Zhou C."/>
            <person name="Villen J."/>
            <person name="Beausoleil S.A."/>
            <person name="Bakalarski C.E."/>
            <person name="Elledge S.J."/>
            <person name="Gygi S.P."/>
        </authorList>
    </citation>
    <scope>PHOSPHORYLATION [LARGE SCALE ANALYSIS] AT SER-116; SER-432; SER-963; SER-964 AND SER-965</scope>
    <scope>IDENTIFICATION BY MASS SPECTROMETRY [LARGE SCALE ANALYSIS]</scope>
    <source>
        <tissue>Cervix carcinoma</tissue>
    </source>
</reference>
<reference key="11">
    <citation type="journal article" date="2009" name="Anal. Chem.">
        <title>Lys-N and trypsin cover complementary parts of the phosphoproteome in a refined SCX-based approach.</title>
        <authorList>
            <person name="Gauci S."/>
            <person name="Helbig A.O."/>
            <person name="Slijper M."/>
            <person name="Krijgsveld J."/>
            <person name="Heck A.J."/>
            <person name="Mohammed S."/>
        </authorList>
    </citation>
    <scope>IDENTIFICATION BY MASS SPECTROMETRY [LARGE SCALE ANALYSIS]</scope>
</reference>
<reference key="12">
    <citation type="journal article" date="2009" name="Sci. Signal.">
        <title>Quantitative phosphoproteomic analysis of T cell receptor signaling reveals system-wide modulation of protein-protein interactions.</title>
        <authorList>
            <person name="Mayya V."/>
            <person name="Lundgren D.H."/>
            <person name="Hwang S.-I."/>
            <person name="Rezaul K."/>
            <person name="Wu L."/>
            <person name="Eng J.K."/>
            <person name="Rodionov V."/>
            <person name="Han D.K."/>
        </authorList>
    </citation>
    <scope>PHOSPHORYLATION [LARGE SCALE ANALYSIS] AT SER-432; SER-435 AND SER-499</scope>
    <scope>IDENTIFICATION BY MASS SPECTROMETRY [LARGE SCALE ANALYSIS]</scope>
    <source>
        <tissue>Leukemic T-cell</tissue>
    </source>
</reference>
<reference key="13">
    <citation type="journal article" date="2010" name="Sci. Signal.">
        <title>Quantitative phosphoproteomics reveals widespread full phosphorylation site occupancy during mitosis.</title>
        <authorList>
            <person name="Olsen J.V."/>
            <person name="Vermeulen M."/>
            <person name="Santamaria A."/>
            <person name="Kumar C."/>
            <person name="Miller M.L."/>
            <person name="Jensen L.J."/>
            <person name="Gnad F."/>
            <person name="Cox J."/>
            <person name="Jensen T.S."/>
            <person name="Nigg E.A."/>
            <person name="Brunak S."/>
            <person name="Mann M."/>
        </authorList>
    </citation>
    <scope>PHOSPHORYLATION [LARGE SCALE ANALYSIS] AT SER-18; SER-116; SER-432; SER-464; THR-479 AND SER-508</scope>
    <scope>IDENTIFICATION BY MASS SPECTROMETRY [LARGE SCALE ANALYSIS]</scope>
    <source>
        <tissue>Cervix carcinoma</tissue>
    </source>
</reference>
<reference key="14">
    <citation type="journal article" date="2011" name="BMC Syst. Biol.">
        <title>Initial characterization of the human central proteome.</title>
        <authorList>
            <person name="Burkard T.R."/>
            <person name="Planyavsky M."/>
            <person name="Kaupe I."/>
            <person name="Breitwieser F.P."/>
            <person name="Buerckstuemmer T."/>
            <person name="Bennett K.L."/>
            <person name="Superti-Furga G."/>
            <person name="Colinge J."/>
        </authorList>
    </citation>
    <scope>IDENTIFICATION BY MASS SPECTROMETRY [LARGE SCALE ANALYSIS]</scope>
</reference>
<reference key="15">
    <citation type="journal article" date="2011" name="Sci. Signal.">
        <title>System-wide temporal characterization of the proteome and phosphoproteome of human embryonic stem cell differentiation.</title>
        <authorList>
            <person name="Rigbolt K.T."/>
            <person name="Prokhorova T.A."/>
            <person name="Akimov V."/>
            <person name="Henningsen J."/>
            <person name="Johansen P.T."/>
            <person name="Kratchmarova I."/>
            <person name="Kassem M."/>
            <person name="Mann M."/>
            <person name="Olsen J.V."/>
            <person name="Blagoev B."/>
        </authorList>
    </citation>
    <scope>PHOSPHORYLATION [LARGE SCALE ANALYSIS] AT SER-432 AND SER-508</scope>
    <scope>IDENTIFICATION BY MASS SPECTROMETRY [LARGE SCALE ANALYSIS]</scope>
</reference>
<reference key="16">
    <citation type="journal article" date="2013" name="Am. J. Med. Genet. A">
        <title>Whole-exome sequencing identified a homozygous FNBP4 mutation in a family with a condition similar to microphthalmia with limb anomalies.</title>
        <authorList>
            <person name="Kondo Y."/>
            <person name="Koshimizu E."/>
            <person name="Megarbane A."/>
            <person name="Hamanoue H."/>
            <person name="Okada I."/>
            <person name="Nishiyama K."/>
            <person name="Kodera H."/>
            <person name="Miyatake S."/>
            <person name="Tsurusaki Y."/>
            <person name="Nakashima M."/>
            <person name="Doi H."/>
            <person name="Miyake N."/>
            <person name="Saitsu H."/>
            <person name="Matsumoto N."/>
        </authorList>
    </citation>
    <scope>TISSUE SPECIFICITY</scope>
    <scope>VARIANT MET-228</scope>
</reference>
<reference key="17">
    <citation type="journal article" date="2013" name="J. Proteome Res.">
        <title>Toward a comprehensive characterization of a human cancer cell phosphoproteome.</title>
        <authorList>
            <person name="Zhou H."/>
            <person name="Di Palma S."/>
            <person name="Preisinger C."/>
            <person name="Peng M."/>
            <person name="Polat A.N."/>
            <person name="Heck A.J."/>
            <person name="Mohammed S."/>
        </authorList>
    </citation>
    <scope>PHOSPHORYLATION [LARGE SCALE ANALYSIS] AT SER-18; SER-116; SER-432; THR-479; SER-499; SER-508; THR-516 AND THR-517</scope>
    <scope>IDENTIFICATION BY MASS SPECTROMETRY [LARGE SCALE ANALYSIS]</scope>
    <source>
        <tissue>Cervix carcinoma</tissue>
        <tissue>Erythroleukemia</tissue>
    </source>
</reference>
<reference key="18">
    <citation type="journal article" date="2014" name="Nat. Struct. Mol. Biol.">
        <title>Uncovering global SUMOylation signaling networks in a site-specific manner.</title>
        <authorList>
            <person name="Hendriks I.A."/>
            <person name="D'Souza R.C."/>
            <person name="Yang B."/>
            <person name="Verlaan-de Vries M."/>
            <person name="Mann M."/>
            <person name="Vertegaal A.C."/>
        </authorList>
    </citation>
    <scope>SUMOYLATION [LARGE SCALE ANALYSIS] AT LYS-348 AND LYS-519</scope>
    <scope>IDENTIFICATION BY MASS SPECTROMETRY [LARGE SCALE ANALYSIS]</scope>
</reference>
<reference key="19">
    <citation type="journal article" date="2014" name="Proc. Natl. Acad. Sci. U.S.A.">
        <title>Mapping of SUMO sites and analysis of SUMOylation changes induced by external stimuli.</title>
        <authorList>
            <person name="Impens F."/>
            <person name="Radoshevich L."/>
            <person name="Cossart P."/>
            <person name="Ribet D."/>
        </authorList>
    </citation>
    <scope>SUMOYLATION [LARGE SCALE ANALYSIS] AT LYS-301; LYS-348 AND LYS-519</scope>
    <scope>IDENTIFICATION BY MASS SPECTROMETRY [LARGE SCALE ANALYSIS]</scope>
</reference>
<reference key="20">
    <citation type="journal article" date="2015" name="Cell Rep.">
        <title>SUMO-2 orchestrates chromatin modifiers in response to DNA damage.</title>
        <authorList>
            <person name="Hendriks I.A."/>
            <person name="Treffers L.W."/>
            <person name="Verlaan-de Vries M."/>
            <person name="Olsen J.V."/>
            <person name="Vertegaal A.C."/>
        </authorList>
    </citation>
    <scope>SUMOYLATION [LARGE SCALE ANALYSIS] AT LYS-348</scope>
    <scope>IDENTIFICATION BY MASS SPECTROMETRY [LARGE SCALE ANALYSIS]</scope>
</reference>
<reference key="21">
    <citation type="journal article" date="2017" name="Nat. Struct. Mol. Biol.">
        <title>Site-specific mapping of the human SUMO proteome reveals co-modification with phosphorylation.</title>
        <authorList>
            <person name="Hendriks I.A."/>
            <person name="Lyon D."/>
            <person name="Young C."/>
            <person name="Jensen L.J."/>
            <person name="Vertegaal A.C."/>
            <person name="Nielsen M.L."/>
        </authorList>
    </citation>
    <scope>SUMOYLATION [LARGE SCALE ANALYSIS] AT LYS-335; LYS-348 AND LYS-519</scope>
    <scope>IDENTIFICATION BY MASS SPECTROMETRY [LARGE SCALE ANALYSIS]</scope>
</reference>